<gene>
    <name evidence="1" type="primary">btuB</name>
    <name type="ordered locus">PBPRA3464</name>
</gene>
<name>BTUB_PHOPR</name>
<organism>
    <name type="scientific">Photobacterium profundum (strain SS9)</name>
    <dbReference type="NCBI Taxonomy" id="298386"/>
    <lineage>
        <taxon>Bacteria</taxon>
        <taxon>Pseudomonadati</taxon>
        <taxon>Pseudomonadota</taxon>
        <taxon>Gammaproteobacteria</taxon>
        <taxon>Vibrionales</taxon>
        <taxon>Vibrionaceae</taxon>
        <taxon>Photobacterium</taxon>
    </lineage>
</organism>
<sequence length="606" mass="66298">MKKTLLAVALAPLCLPSQVFAADESSNDVMVVTANRFEQPIKNVIAPISVVTKEEIDAIQAKSIAEVLRRLPGVQVVSGGYGQATEVYVRGTTSRHLLVMINGVRIGSATLGSADFSQIPLTGIERIELIRGSRAALYGSDAIGGVLNIITAYQPGESVAEVTAGGGSDGFYQLGGSVAGGLGESGWGKIALKTEGADGFSARKEPFEQDDDGFKNSNVVAEVGTHVGDHWKLSLQGYYHDGESDYDDSYGAPHAQSESSLFNIAAKAGYSNDKLDSQFTVAQNQDENRNFNDVSSGSKIKTERTVANWQNHYQLTDGLELGGGLEWYRDSVSNTGTQYAEDERDNTAVYLTSIYRISDWQFEGSVRTDDNDSYGTNNTWQLATAYNITSELKVSANAGTGFKAPTFNDLYWPDSGNPNLKPEESKNYEISLSGTHQLLDWSITGYQSEIDQLIAWAPKDASNPSGDWIPMNVDEAEIQGIELTAGFATGMLYHDVSYDYLDAKDKGLDKQLIRRSKDSAKWNVSYLAEQWQLDVSAIYKGTSYDDAANTKKLDAYTLVDIAASYFVTDNLSVRGRIANLFDKDYVAKETYNVQERSYYATATYKF</sequence>
<feature type="signal peptide" evidence="1">
    <location>
        <begin position="1"/>
        <end position="21"/>
    </location>
</feature>
<feature type="chain" id="PRO_0000003485" description="Vitamin B12 transporter BtuB">
    <location>
        <begin position="22"/>
        <end position="606"/>
    </location>
</feature>
<feature type="domain" description="TBDR plug" evidence="2">
    <location>
        <begin position="40"/>
        <end position="152"/>
    </location>
</feature>
<feature type="domain" description="TBDR beta-barrel" evidence="2">
    <location>
        <begin position="157"/>
        <end position="606"/>
    </location>
</feature>
<feature type="short sequence motif" description="TonB box">
    <location>
        <begin position="28"/>
        <end position="35"/>
    </location>
</feature>
<feature type="short sequence motif" description="TonB C-terminal box">
    <location>
        <begin position="589"/>
        <end position="606"/>
    </location>
</feature>
<reference key="1">
    <citation type="journal article" date="2005" name="Science">
        <title>Life at depth: Photobacterium profundum genome sequence and expression analysis.</title>
        <authorList>
            <person name="Vezzi A."/>
            <person name="Campanaro S."/>
            <person name="D'Angelo M."/>
            <person name="Simonato F."/>
            <person name="Vitulo N."/>
            <person name="Lauro F.M."/>
            <person name="Cestaro A."/>
            <person name="Malacrida G."/>
            <person name="Simionati B."/>
            <person name="Cannata N."/>
            <person name="Romualdi C."/>
            <person name="Bartlett D.H."/>
            <person name="Valle G."/>
        </authorList>
    </citation>
    <scope>NUCLEOTIDE SEQUENCE [LARGE SCALE GENOMIC DNA]</scope>
    <source>
        <strain>ATCC BAA-1253 / SS9</strain>
    </source>
</reference>
<protein>
    <recommendedName>
        <fullName evidence="1">Vitamin B12 transporter BtuB</fullName>
    </recommendedName>
    <alternativeName>
        <fullName evidence="1">Cobalamin receptor</fullName>
    </alternativeName>
    <alternativeName>
        <fullName evidence="1">Outer membrane cobalamin translocator</fullName>
    </alternativeName>
</protein>
<accession>Q6LLU3</accession>
<proteinExistence type="inferred from homology"/>
<keyword id="KW-0998">Cell outer membrane</keyword>
<keyword id="KW-0406">Ion transport</keyword>
<keyword id="KW-0472">Membrane</keyword>
<keyword id="KW-0626">Porin</keyword>
<keyword id="KW-1185">Reference proteome</keyword>
<keyword id="KW-0732">Signal</keyword>
<keyword id="KW-0798">TonB box</keyword>
<keyword id="KW-0812">Transmembrane</keyword>
<keyword id="KW-1134">Transmembrane beta strand</keyword>
<keyword id="KW-0813">Transport</keyword>
<dbReference type="EMBL" id="CR378674">
    <property type="protein sequence ID" value="CAG21735.1"/>
    <property type="molecule type" value="Genomic_DNA"/>
</dbReference>
<dbReference type="RefSeq" id="WP_011219976.1">
    <property type="nucleotide sequence ID" value="NC_006370.1"/>
</dbReference>
<dbReference type="SMR" id="Q6LLU3"/>
<dbReference type="STRING" id="298386.PBPRA3464"/>
<dbReference type="KEGG" id="ppr:PBPRA3464"/>
<dbReference type="eggNOG" id="COG4206">
    <property type="taxonomic scope" value="Bacteria"/>
</dbReference>
<dbReference type="HOGENOM" id="CLU_008287_18_5_6"/>
<dbReference type="Proteomes" id="UP000000593">
    <property type="component" value="Chromosome 1"/>
</dbReference>
<dbReference type="GO" id="GO:0009279">
    <property type="term" value="C:cell outer membrane"/>
    <property type="evidence" value="ECO:0007669"/>
    <property type="project" value="UniProtKB-SubCell"/>
</dbReference>
<dbReference type="GO" id="GO:0046930">
    <property type="term" value="C:pore complex"/>
    <property type="evidence" value="ECO:0007669"/>
    <property type="project" value="UniProtKB-KW"/>
</dbReference>
<dbReference type="GO" id="GO:0015420">
    <property type="term" value="F:ABC-type vitamin B12 transporter activity"/>
    <property type="evidence" value="ECO:0007669"/>
    <property type="project" value="InterPro"/>
</dbReference>
<dbReference type="GO" id="GO:0015288">
    <property type="term" value="F:porin activity"/>
    <property type="evidence" value="ECO:0007669"/>
    <property type="project" value="UniProtKB-KW"/>
</dbReference>
<dbReference type="GO" id="GO:0006811">
    <property type="term" value="P:monoatomic ion transport"/>
    <property type="evidence" value="ECO:0007669"/>
    <property type="project" value="UniProtKB-KW"/>
</dbReference>
<dbReference type="CDD" id="cd01347">
    <property type="entry name" value="ligand_gated_channel"/>
    <property type="match status" value="1"/>
</dbReference>
<dbReference type="Gene3D" id="2.40.170.20">
    <property type="entry name" value="TonB-dependent receptor, beta-barrel domain"/>
    <property type="match status" value="1"/>
</dbReference>
<dbReference type="Gene3D" id="2.170.130.10">
    <property type="entry name" value="TonB-dependent receptor, plug domain"/>
    <property type="match status" value="1"/>
</dbReference>
<dbReference type="HAMAP" id="MF_01531">
    <property type="entry name" value="BtuB"/>
    <property type="match status" value="1"/>
</dbReference>
<dbReference type="InterPro" id="IPR010101">
    <property type="entry name" value="B12_transptr_BtuB"/>
</dbReference>
<dbReference type="InterPro" id="IPR012910">
    <property type="entry name" value="Plug_dom"/>
</dbReference>
<dbReference type="InterPro" id="IPR037066">
    <property type="entry name" value="Plug_dom_sf"/>
</dbReference>
<dbReference type="InterPro" id="IPR039426">
    <property type="entry name" value="TonB-dep_rcpt-like"/>
</dbReference>
<dbReference type="InterPro" id="IPR000531">
    <property type="entry name" value="TonB-dep_rcpt_b-brl"/>
</dbReference>
<dbReference type="InterPro" id="IPR036942">
    <property type="entry name" value="TonB_rcpt_b-brl_sf"/>
</dbReference>
<dbReference type="PANTHER" id="PTHR30069:SF53">
    <property type="entry name" value="COLICIN I RECEPTOR-RELATED"/>
    <property type="match status" value="1"/>
</dbReference>
<dbReference type="PANTHER" id="PTHR30069">
    <property type="entry name" value="TONB-DEPENDENT OUTER MEMBRANE RECEPTOR"/>
    <property type="match status" value="1"/>
</dbReference>
<dbReference type="Pfam" id="PF07715">
    <property type="entry name" value="Plug"/>
    <property type="match status" value="1"/>
</dbReference>
<dbReference type="Pfam" id="PF00593">
    <property type="entry name" value="TonB_dep_Rec_b-barrel"/>
    <property type="match status" value="1"/>
</dbReference>
<dbReference type="SUPFAM" id="SSF56935">
    <property type="entry name" value="Porins"/>
    <property type="match status" value="1"/>
</dbReference>
<dbReference type="PROSITE" id="PS52016">
    <property type="entry name" value="TONB_DEPENDENT_REC_3"/>
    <property type="match status" value="1"/>
</dbReference>
<comment type="function">
    <text evidence="1">Involved in the active translocation of vitamin B12 (cyanocobalamin) across the outer membrane to the periplasmic space. It derives its energy for transport by interacting with the trans-periplasmic membrane protein TonB.</text>
</comment>
<comment type="subcellular location">
    <subcellularLocation>
        <location evidence="1">Cell outer membrane</location>
        <topology evidence="1">Multi-pass membrane protein</topology>
    </subcellularLocation>
</comment>
<comment type="similarity">
    <text evidence="1">Belongs to the TonB-dependent receptor family. BtuB (TC 1.B.14.3.1) subfamily.</text>
</comment>
<evidence type="ECO:0000255" key="1">
    <source>
        <dbReference type="HAMAP-Rule" id="MF_01531"/>
    </source>
</evidence>
<evidence type="ECO:0000255" key="2">
    <source>
        <dbReference type="PROSITE-ProRule" id="PRU01360"/>
    </source>
</evidence>